<dbReference type="GO" id="GO:0005576">
    <property type="term" value="C:extracellular region"/>
    <property type="evidence" value="ECO:0007669"/>
    <property type="project" value="UniProtKB-SubCell"/>
</dbReference>
<dbReference type="GO" id="GO:0007218">
    <property type="term" value="P:neuropeptide signaling pathway"/>
    <property type="evidence" value="ECO:0007669"/>
    <property type="project" value="UniProtKB-KW"/>
</dbReference>
<dbReference type="InterPro" id="IPR013231">
    <property type="entry name" value="Periviscerokinin"/>
</dbReference>
<dbReference type="Pfam" id="PF08259">
    <property type="entry name" value="Periviscerokin"/>
    <property type="match status" value="1"/>
</dbReference>
<protein>
    <recommendedName>
        <fullName>Periviscerokinin-3</fullName>
        <shortName>DerVe-PVK-3</shortName>
    </recommendedName>
</protein>
<organism>
    <name type="scientific">Derocalymma versicolor</name>
    <name type="common">Cockroach</name>
    <dbReference type="NCBI Taxonomy" id="344692"/>
    <lineage>
        <taxon>Eukaryota</taxon>
        <taxon>Metazoa</taxon>
        <taxon>Ecdysozoa</taxon>
        <taxon>Arthropoda</taxon>
        <taxon>Hexapoda</taxon>
        <taxon>Insecta</taxon>
        <taxon>Pterygota</taxon>
        <taxon>Neoptera</taxon>
        <taxon>Polyneoptera</taxon>
        <taxon>Dictyoptera</taxon>
        <taxon>Blattodea</taxon>
        <taxon>Blaberoidea</taxon>
        <taxon>Blaberidae</taxon>
        <taxon>Perisphaerinae</taxon>
        <taxon>Derocalymma</taxon>
    </lineage>
</organism>
<sequence length="11" mass="1139">GSSGMISFPRT</sequence>
<accession>P84663</accession>
<evidence type="ECO:0000255" key="1"/>
<evidence type="ECO:0000269" key="2">
    <source>
    </source>
</evidence>
<evidence type="ECO:0000269" key="3">
    <source ref="2"/>
</evidence>
<evidence type="ECO:0000305" key="4"/>
<reference key="1">
    <citation type="journal article" date="2009" name="BMC Evol. Biol.">
        <title>A proteomic approach for studying insect phylogeny: CAPA peptides of ancient insect taxa (Dictyoptera, Blattoptera) as a test case.</title>
        <authorList>
            <person name="Roth S."/>
            <person name="Fromm B."/>
            <person name="Gaede G."/>
            <person name="Predel R."/>
        </authorList>
    </citation>
    <scope>PROTEIN SEQUENCE</scope>
    <scope>AMIDATION AT THR-11</scope>
    <source>
        <tissue>Abdominal perisympathetic organs</tissue>
    </source>
</reference>
<reference evidence="4" key="2">
    <citation type="submission" date="2005-09" db="UniProtKB">
        <authorList>
            <person name="Predel R."/>
        </authorList>
    </citation>
    <scope>PROTEIN SEQUENCE</scope>
    <scope>TISSUE SPECIFICITY</scope>
    <scope>MASS SPECTROMETRY</scope>
    <scope>AMIDATION AT THR-11</scope>
    <source>
        <tissue>Abdominal perisympathetic organs</tissue>
    </source>
</reference>
<keyword id="KW-0027">Amidation</keyword>
<keyword id="KW-0903">Direct protein sequencing</keyword>
<keyword id="KW-0527">Neuropeptide</keyword>
<keyword id="KW-0964">Secreted</keyword>
<comment type="function">
    <text evidence="4">Mediates visceral muscle contractile activity (myotropic activity).</text>
</comment>
<comment type="subcellular location">
    <subcellularLocation>
        <location evidence="4">Secreted</location>
    </subcellularLocation>
</comment>
<comment type="tissue specificity">
    <text evidence="3">Expressed in abdominal perisympathetic organs and abdominal ganglia.</text>
</comment>
<comment type="mass spectrometry" mass="1138.6" method="MALDI" evidence="3">
    <text>With amidation.</text>
</comment>
<comment type="similarity">
    <text evidence="1">Belongs to the periviscerokinin family.</text>
</comment>
<feature type="peptide" id="PRO_0000044285" description="Periviscerokinin-3">
    <location>
        <begin position="1"/>
        <end position="11"/>
    </location>
</feature>
<feature type="modified residue" description="Threonine amide" evidence="2 3">
    <location>
        <position position="11"/>
    </location>
</feature>
<name>PVK3_DERVE</name>
<proteinExistence type="evidence at protein level"/>